<gene>
    <name evidence="1" type="primary">rpmB</name>
    <name type="ordered locus">cauri_0822</name>
</gene>
<name>RL28_CORA7</name>
<feature type="chain" id="PRO_1000195916" description="Large ribosomal subunit protein bL28">
    <location>
        <begin position="1"/>
        <end position="78"/>
    </location>
</feature>
<comment type="similarity">
    <text evidence="1">Belongs to the bacterial ribosomal protein bL28 family.</text>
</comment>
<keyword id="KW-1185">Reference proteome</keyword>
<keyword id="KW-0687">Ribonucleoprotein</keyword>
<keyword id="KW-0689">Ribosomal protein</keyword>
<protein>
    <recommendedName>
        <fullName evidence="1">Large ribosomal subunit protein bL28</fullName>
    </recommendedName>
    <alternativeName>
        <fullName evidence="2">50S ribosomal protein L28</fullName>
    </alternativeName>
</protein>
<proteinExistence type="inferred from homology"/>
<reference key="1">
    <citation type="journal article" date="2010" name="BMC Genomics">
        <title>Complete genome sequence and lifestyle of black-pigmented Corynebacterium aurimucosum ATCC 700975 (formerly C. nigricans CN-1) isolated from a vaginal swab of a woman with spontaneous abortion.</title>
        <authorList>
            <person name="Trost E."/>
            <person name="Gotker S."/>
            <person name="Schneider J."/>
            <person name="Schneiker-Bekel S."/>
            <person name="Szczepanowski R."/>
            <person name="Tilker A."/>
            <person name="Viehoever P."/>
            <person name="Arnold W."/>
            <person name="Bekel T."/>
            <person name="Blom J."/>
            <person name="Gartemann K.H."/>
            <person name="Linke B."/>
            <person name="Goesmann A."/>
            <person name="Puhler A."/>
            <person name="Shukla S.K."/>
            <person name="Tauch A."/>
        </authorList>
    </citation>
    <scope>NUCLEOTIDE SEQUENCE [LARGE SCALE GENOMIC DNA]</scope>
    <source>
        <strain>ATCC 700975 / DSM 44827 / CIP 107346 / CN-1</strain>
    </source>
</reference>
<organism>
    <name type="scientific">Corynebacterium aurimucosum (strain ATCC 700975 / DSM 44827 / CIP 107346 / CN-1)</name>
    <name type="common">Corynebacterium nigricans</name>
    <dbReference type="NCBI Taxonomy" id="548476"/>
    <lineage>
        <taxon>Bacteria</taxon>
        <taxon>Bacillati</taxon>
        <taxon>Actinomycetota</taxon>
        <taxon>Actinomycetes</taxon>
        <taxon>Mycobacteriales</taxon>
        <taxon>Corynebacteriaceae</taxon>
        <taxon>Corynebacterium</taxon>
    </lineage>
</organism>
<dbReference type="EMBL" id="CP001601">
    <property type="protein sequence ID" value="ACP32419.1"/>
    <property type="molecule type" value="Genomic_DNA"/>
</dbReference>
<dbReference type="RefSeq" id="WP_010187623.1">
    <property type="nucleotide sequence ID" value="NZ_ACLH01000014.1"/>
</dbReference>
<dbReference type="SMR" id="C3PF15"/>
<dbReference type="STRING" id="548476.cauri_0822"/>
<dbReference type="GeneID" id="79852361"/>
<dbReference type="KEGG" id="car:cauri_0822"/>
<dbReference type="eggNOG" id="COG0227">
    <property type="taxonomic scope" value="Bacteria"/>
</dbReference>
<dbReference type="HOGENOM" id="CLU_064548_3_1_11"/>
<dbReference type="OrthoDB" id="9805609at2"/>
<dbReference type="Proteomes" id="UP000002077">
    <property type="component" value="Chromosome"/>
</dbReference>
<dbReference type="GO" id="GO:1990904">
    <property type="term" value="C:ribonucleoprotein complex"/>
    <property type="evidence" value="ECO:0007669"/>
    <property type="project" value="UniProtKB-KW"/>
</dbReference>
<dbReference type="GO" id="GO:0005840">
    <property type="term" value="C:ribosome"/>
    <property type="evidence" value="ECO:0007669"/>
    <property type="project" value="UniProtKB-KW"/>
</dbReference>
<dbReference type="GO" id="GO:0003735">
    <property type="term" value="F:structural constituent of ribosome"/>
    <property type="evidence" value="ECO:0007669"/>
    <property type="project" value="InterPro"/>
</dbReference>
<dbReference type="GO" id="GO:0006412">
    <property type="term" value="P:translation"/>
    <property type="evidence" value="ECO:0007669"/>
    <property type="project" value="UniProtKB-UniRule"/>
</dbReference>
<dbReference type="FunFam" id="2.30.170.40:FF:000001">
    <property type="entry name" value="50S ribosomal protein L28"/>
    <property type="match status" value="1"/>
</dbReference>
<dbReference type="Gene3D" id="2.30.170.40">
    <property type="entry name" value="Ribosomal protein L28/L24"/>
    <property type="match status" value="1"/>
</dbReference>
<dbReference type="HAMAP" id="MF_00373">
    <property type="entry name" value="Ribosomal_bL28"/>
    <property type="match status" value="1"/>
</dbReference>
<dbReference type="InterPro" id="IPR026569">
    <property type="entry name" value="Ribosomal_bL28"/>
</dbReference>
<dbReference type="InterPro" id="IPR034704">
    <property type="entry name" value="Ribosomal_bL28/bL31-like_sf"/>
</dbReference>
<dbReference type="InterPro" id="IPR001383">
    <property type="entry name" value="Ribosomal_bL28_bact-type"/>
</dbReference>
<dbReference type="InterPro" id="IPR037147">
    <property type="entry name" value="Ribosomal_bL28_sf"/>
</dbReference>
<dbReference type="NCBIfam" id="TIGR00009">
    <property type="entry name" value="L28"/>
    <property type="match status" value="1"/>
</dbReference>
<dbReference type="PANTHER" id="PTHR13528">
    <property type="entry name" value="39S RIBOSOMAL PROTEIN L28, MITOCHONDRIAL"/>
    <property type="match status" value="1"/>
</dbReference>
<dbReference type="PANTHER" id="PTHR13528:SF2">
    <property type="entry name" value="LARGE RIBOSOMAL SUBUNIT PROTEIN BL28M"/>
    <property type="match status" value="1"/>
</dbReference>
<dbReference type="Pfam" id="PF00830">
    <property type="entry name" value="Ribosomal_L28"/>
    <property type="match status" value="1"/>
</dbReference>
<dbReference type="SUPFAM" id="SSF143800">
    <property type="entry name" value="L28p-like"/>
    <property type="match status" value="1"/>
</dbReference>
<accession>C3PF15</accession>
<evidence type="ECO:0000255" key="1">
    <source>
        <dbReference type="HAMAP-Rule" id="MF_00373"/>
    </source>
</evidence>
<evidence type="ECO:0000305" key="2"/>
<sequence>MSAICQVTGRKPEFGKQVSHSHRRTSRRWNPNVQRRRYYLPSEGRTITLTVSTKGMKIIDRDGIESVVAKIRARGEKI</sequence>